<proteinExistence type="inferred from homology"/>
<dbReference type="EMBL" id="EU118126">
    <property type="protein sequence ID" value="ABV02369.1"/>
    <property type="molecule type" value="Genomic_DNA"/>
</dbReference>
<dbReference type="RefSeq" id="YP_001468329.1">
    <property type="nucleotide sequence ID" value="NC_009808.1"/>
</dbReference>
<dbReference type="GeneID" id="5601327"/>
<dbReference type="GO" id="GO:0009507">
    <property type="term" value="C:chloroplast"/>
    <property type="evidence" value="ECO:0007669"/>
    <property type="project" value="UniProtKB-SubCell"/>
</dbReference>
<dbReference type="GO" id="GO:1990904">
    <property type="term" value="C:ribonucleoprotein complex"/>
    <property type="evidence" value="ECO:0007669"/>
    <property type="project" value="UniProtKB-KW"/>
</dbReference>
<dbReference type="GO" id="GO:0005840">
    <property type="term" value="C:ribosome"/>
    <property type="evidence" value="ECO:0007669"/>
    <property type="project" value="UniProtKB-KW"/>
</dbReference>
<dbReference type="GO" id="GO:0003735">
    <property type="term" value="F:structural constituent of ribosome"/>
    <property type="evidence" value="ECO:0007669"/>
    <property type="project" value="InterPro"/>
</dbReference>
<dbReference type="GO" id="GO:0006412">
    <property type="term" value="P:translation"/>
    <property type="evidence" value="ECO:0007669"/>
    <property type="project" value="UniProtKB-UniRule"/>
</dbReference>
<dbReference type="Gene3D" id="2.20.28.120">
    <property type="entry name" value="Ribosomal protein L33"/>
    <property type="match status" value="1"/>
</dbReference>
<dbReference type="HAMAP" id="MF_00294">
    <property type="entry name" value="Ribosomal_bL33"/>
    <property type="match status" value="1"/>
</dbReference>
<dbReference type="InterPro" id="IPR001705">
    <property type="entry name" value="Ribosomal_bL33"/>
</dbReference>
<dbReference type="InterPro" id="IPR018264">
    <property type="entry name" value="Ribosomal_bL33_CS"/>
</dbReference>
<dbReference type="InterPro" id="IPR038584">
    <property type="entry name" value="Ribosomal_bL33_sf"/>
</dbReference>
<dbReference type="InterPro" id="IPR011332">
    <property type="entry name" value="Ribosomal_zn-bd"/>
</dbReference>
<dbReference type="NCBIfam" id="NF001764">
    <property type="entry name" value="PRK00504.1"/>
    <property type="match status" value="1"/>
</dbReference>
<dbReference type="NCBIfam" id="NF001860">
    <property type="entry name" value="PRK00595.1"/>
    <property type="match status" value="1"/>
</dbReference>
<dbReference type="NCBIfam" id="TIGR01023">
    <property type="entry name" value="rpmG_bact"/>
    <property type="match status" value="1"/>
</dbReference>
<dbReference type="PANTHER" id="PTHR43168">
    <property type="entry name" value="50S RIBOSOMAL PROTEIN L33, CHLOROPLASTIC"/>
    <property type="match status" value="1"/>
</dbReference>
<dbReference type="PANTHER" id="PTHR43168:SF2">
    <property type="entry name" value="LARGE RIBOSOMAL SUBUNIT PROTEIN BL33C"/>
    <property type="match status" value="1"/>
</dbReference>
<dbReference type="Pfam" id="PF00471">
    <property type="entry name" value="Ribosomal_L33"/>
    <property type="match status" value="1"/>
</dbReference>
<dbReference type="SUPFAM" id="SSF57829">
    <property type="entry name" value="Zn-binding ribosomal proteins"/>
    <property type="match status" value="1"/>
</dbReference>
<dbReference type="PROSITE" id="PS00582">
    <property type="entry name" value="RIBOSOMAL_L33"/>
    <property type="match status" value="1"/>
</dbReference>
<name>RK33_IPOPU</name>
<protein>
    <recommendedName>
        <fullName evidence="1">Large ribosomal subunit protein bL33c</fullName>
    </recommendedName>
    <alternativeName>
        <fullName evidence="2">50S ribosomal protein L33, chloroplastic</fullName>
    </alternativeName>
</protein>
<organism>
    <name type="scientific">Ipomoea purpurea</name>
    <name type="common">Common morning glory</name>
    <name type="synonym">Pharbitis purpurea</name>
    <dbReference type="NCBI Taxonomy" id="4121"/>
    <lineage>
        <taxon>Eukaryota</taxon>
        <taxon>Viridiplantae</taxon>
        <taxon>Streptophyta</taxon>
        <taxon>Embryophyta</taxon>
        <taxon>Tracheophyta</taxon>
        <taxon>Spermatophyta</taxon>
        <taxon>Magnoliopsida</taxon>
        <taxon>eudicotyledons</taxon>
        <taxon>Gunneridae</taxon>
        <taxon>Pentapetalae</taxon>
        <taxon>asterids</taxon>
        <taxon>lamiids</taxon>
        <taxon>Solanales</taxon>
        <taxon>Convolvulaceae</taxon>
        <taxon>Ipomoeeae</taxon>
        <taxon>Ipomoea</taxon>
    </lineage>
</organism>
<evidence type="ECO:0000255" key="1">
    <source>
        <dbReference type="HAMAP-Rule" id="MF_00294"/>
    </source>
</evidence>
<evidence type="ECO:0000305" key="2"/>
<accession>A7Y3G7</accession>
<geneLocation type="chloroplast"/>
<comment type="subcellular location">
    <subcellularLocation>
        <location>Plastid</location>
        <location>Chloroplast</location>
    </subcellularLocation>
</comment>
<comment type="similarity">
    <text evidence="1">Belongs to the bacterial ribosomal protein bL33 family.</text>
</comment>
<sequence length="66" mass="7548">MAKSKDVRVAVILECTSCVRNGVNKVSTGISRYITQKNRHNTPNPLELKKFCPYCYKHTIHGEIKK</sequence>
<keyword id="KW-0150">Chloroplast</keyword>
<keyword id="KW-0934">Plastid</keyword>
<keyword id="KW-0687">Ribonucleoprotein</keyword>
<keyword id="KW-0689">Ribosomal protein</keyword>
<feature type="chain" id="PRO_0000356808" description="Large ribosomal subunit protein bL33c">
    <location>
        <begin position="1"/>
        <end position="66"/>
    </location>
</feature>
<gene>
    <name evidence="1" type="primary">rpl33</name>
</gene>
<reference key="1">
    <citation type="journal article" date="2007" name="BMC Plant Biol.">
        <title>Complete plastid genome sequences suggest strong selection for retention of photosynthetic genes in the parasitic plant genus Cuscuta.</title>
        <authorList>
            <person name="McNeal J.R."/>
            <person name="Kuehl J.V."/>
            <person name="Boore J.L."/>
            <person name="dePamphilis C.W."/>
        </authorList>
    </citation>
    <scope>NUCLEOTIDE SEQUENCE [LARGE SCALE GENOMIC DNA]</scope>
</reference>